<protein>
    <recommendedName>
        <fullName evidence="1">Tyrosine--tRNA ligase</fullName>
        <ecNumber evidence="1">6.1.1.1</ecNumber>
    </recommendedName>
    <alternativeName>
        <fullName evidence="1">Tyrosyl-tRNA synthetase</fullName>
        <shortName evidence="1">TyrRS</shortName>
    </alternativeName>
</protein>
<reference key="1">
    <citation type="journal article" date="2009" name="PLoS Genet.">
        <title>The complete genome and proteome of Laribacter hongkongensis reveal potential mechanisms for adaptations to different temperatures and habitats.</title>
        <authorList>
            <person name="Woo P.C.Y."/>
            <person name="Lau S.K.P."/>
            <person name="Tse H."/>
            <person name="Teng J.L.L."/>
            <person name="Curreem S.O."/>
            <person name="Tsang A.K.L."/>
            <person name="Fan R.Y.Y."/>
            <person name="Wong G.K.M."/>
            <person name="Huang Y."/>
            <person name="Loman N.J."/>
            <person name="Snyder L.A.S."/>
            <person name="Cai J.J."/>
            <person name="Huang J.-D."/>
            <person name="Mak W."/>
            <person name="Pallen M.J."/>
            <person name="Lok S."/>
            <person name="Yuen K.-Y."/>
        </authorList>
    </citation>
    <scope>NUCLEOTIDE SEQUENCE [LARGE SCALE GENOMIC DNA]</scope>
    <source>
        <strain>HLHK9</strain>
    </source>
</reference>
<gene>
    <name evidence="1" type="primary">tyrS</name>
    <name type="ordered locus">LHK_00607</name>
</gene>
<evidence type="ECO:0000255" key="1">
    <source>
        <dbReference type="HAMAP-Rule" id="MF_02006"/>
    </source>
</evidence>
<name>SYY_LARHH</name>
<dbReference type="EC" id="6.1.1.1" evidence="1"/>
<dbReference type="EMBL" id="CP001154">
    <property type="protein sequence ID" value="ACO73600.1"/>
    <property type="molecule type" value="Genomic_DNA"/>
</dbReference>
<dbReference type="RefSeq" id="WP_012696092.1">
    <property type="nucleotide sequence ID" value="NC_012559.1"/>
</dbReference>
<dbReference type="SMR" id="C1DCW5"/>
<dbReference type="STRING" id="557598.LHK_00607"/>
<dbReference type="KEGG" id="lhk:LHK_00607"/>
<dbReference type="eggNOG" id="COG0162">
    <property type="taxonomic scope" value="Bacteria"/>
</dbReference>
<dbReference type="HOGENOM" id="CLU_024003_0_3_4"/>
<dbReference type="Proteomes" id="UP000002010">
    <property type="component" value="Chromosome"/>
</dbReference>
<dbReference type="GO" id="GO:0005829">
    <property type="term" value="C:cytosol"/>
    <property type="evidence" value="ECO:0007669"/>
    <property type="project" value="TreeGrafter"/>
</dbReference>
<dbReference type="GO" id="GO:0005524">
    <property type="term" value="F:ATP binding"/>
    <property type="evidence" value="ECO:0007669"/>
    <property type="project" value="UniProtKB-UniRule"/>
</dbReference>
<dbReference type="GO" id="GO:0003723">
    <property type="term" value="F:RNA binding"/>
    <property type="evidence" value="ECO:0007669"/>
    <property type="project" value="UniProtKB-KW"/>
</dbReference>
<dbReference type="GO" id="GO:0004831">
    <property type="term" value="F:tyrosine-tRNA ligase activity"/>
    <property type="evidence" value="ECO:0007669"/>
    <property type="project" value="UniProtKB-UniRule"/>
</dbReference>
<dbReference type="GO" id="GO:0006437">
    <property type="term" value="P:tyrosyl-tRNA aminoacylation"/>
    <property type="evidence" value="ECO:0007669"/>
    <property type="project" value="UniProtKB-UniRule"/>
</dbReference>
<dbReference type="CDD" id="cd00165">
    <property type="entry name" value="S4"/>
    <property type="match status" value="1"/>
</dbReference>
<dbReference type="CDD" id="cd00805">
    <property type="entry name" value="TyrRS_core"/>
    <property type="match status" value="1"/>
</dbReference>
<dbReference type="FunFam" id="1.10.240.10:FF:000001">
    <property type="entry name" value="Tyrosine--tRNA ligase"/>
    <property type="match status" value="1"/>
</dbReference>
<dbReference type="FunFam" id="3.40.50.620:FF:000008">
    <property type="entry name" value="Tyrosine--tRNA ligase"/>
    <property type="match status" value="1"/>
</dbReference>
<dbReference type="Gene3D" id="3.40.50.620">
    <property type="entry name" value="HUPs"/>
    <property type="match status" value="1"/>
</dbReference>
<dbReference type="Gene3D" id="3.10.290.10">
    <property type="entry name" value="RNA-binding S4 domain"/>
    <property type="match status" value="1"/>
</dbReference>
<dbReference type="Gene3D" id="1.10.240.10">
    <property type="entry name" value="Tyrosyl-Transfer RNA Synthetase"/>
    <property type="match status" value="1"/>
</dbReference>
<dbReference type="HAMAP" id="MF_02006">
    <property type="entry name" value="Tyr_tRNA_synth_type1"/>
    <property type="match status" value="1"/>
</dbReference>
<dbReference type="InterPro" id="IPR001412">
    <property type="entry name" value="aa-tRNA-synth_I_CS"/>
</dbReference>
<dbReference type="InterPro" id="IPR002305">
    <property type="entry name" value="aa-tRNA-synth_Ic"/>
</dbReference>
<dbReference type="InterPro" id="IPR014729">
    <property type="entry name" value="Rossmann-like_a/b/a_fold"/>
</dbReference>
<dbReference type="InterPro" id="IPR002942">
    <property type="entry name" value="S4_RNA-bd"/>
</dbReference>
<dbReference type="InterPro" id="IPR036986">
    <property type="entry name" value="S4_RNA-bd_sf"/>
</dbReference>
<dbReference type="InterPro" id="IPR054608">
    <property type="entry name" value="SYY-like_C"/>
</dbReference>
<dbReference type="InterPro" id="IPR002307">
    <property type="entry name" value="Tyr-tRNA-ligase"/>
</dbReference>
<dbReference type="InterPro" id="IPR024088">
    <property type="entry name" value="Tyr-tRNA-ligase_bac-type"/>
</dbReference>
<dbReference type="InterPro" id="IPR024107">
    <property type="entry name" value="Tyr-tRNA-ligase_bac_1"/>
</dbReference>
<dbReference type="NCBIfam" id="TIGR00234">
    <property type="entry name" value="tyrS"/>
    <property type="match status" value="1"/>
</dbReference>
<dbReference type="PANTHER" id="PTHR11766:SF0">
    <property type="entry name" value="TYROSINE--TRNA LIGASE, MITOCHONDRIAL"/>
    <property type="match status" value="1"/>
</dbReference>
<dbReference type="PANTHER" id="PTHR11766">
    <property type="entry name" value="TYROSYL-TRNA SYNTHETASE"/>
    <property type="match status" value="1"/>
</dbReference>
<dbReference type="Pfam" id="PF22421">
    <property type="entry name" value="SYY_C-terminal"/>
    <property type="match status" value="1"/>
</dbReference>
<dbReference type="Pfam" id="PF00579">
    <property type="entry name" value="tRNA-synt_1b"/>
    <property type="match status" value="1"/>
</dbReference>
<dbReference type="PRINTS" id="PR01040">
    <property type="entry name" value="TRNASYNTHTYR"/>
</dbReference>
<dbReference type="SMART" id="SM00363">
    <property type="entry name" value="S4"/>
    <property type="match status" value="1"/>
</dbReference>
<dbReference type="SUPFAM" id="SSF55174">
    <property type="entry name" value="Alpha-L RNA-binding motif"/>
    <property type="match status" value="1"/>
</dbReference>
<dbReference type="SUPFAM" id="SSF52374">
    <property type="entry name" value="Nucleotidylyl transferase"/>
    <property type="match status" value="1"/>
</dbReference>
<dbReference type="PROSITE" id="PS00178">
    <property type="entry name" value="AA_TRNA_LIGASE_I"/>
    <property type="match status" value="1"/>
</dbReference>
<dbReference type="PROSITE" id="PS50889">
    <property type="entry name" value="S4"/>
    <property type="match status" value="1"/>
</dbReference>
<keyword id="KW-0030">Aminoacyl-tRNA synthetase</keyword>
<keyword id="KW-0067">ATP-binding</keyword>
<keyword id="KW-0963">Cytoplasm</keyword>
<keyword id="KW-0436">Ligase</keyword>
<keyword id="KW-0547">Nucleotide-binding</keyword>
<keyword id="KW-0648">Protein biosynthesis</keyword>
<keyword id="KW-1185">Reference proteome</keyword>
<keyword id="KW-0694">RNA-binding</keyword>
<feature type="chain" id="PRO_1000189304" description="Tyrosine--tRNA ligase">
    <location>
        <begin position="1"/>
        <end position="425"/>
    </location>
</feature>
<feature type="domain" description="S4 RNA-binding" evidence="1">
    <location>
        <begin position="357"/>
        <end position="422"/>
    </location>
</feature>
<feature type="short sequence motif" description="'HIGH' region">
    <location>
        <begin position="42"/>
        <end position="51"/>
    </location>
</feature>
<feature type="short sequence motif" description="'KMSKS' region">
    <location>
        <begin position="234"/>
        <end position="238"/>
    </location>
</feature>
<feature type="binding site" evidence="1">
    <location>
        <position position="37"/>
    </location>
    <ligand>
        <name>L-tyrosine</name>
        <dbReference type="ChEBI" id="CHEBI:58315"/>
    </ligand>
</feature>
<feature type="binding site" evidence="1">
    <location>
        <position position="174"/>
    </location>
    <ligand>
        <name>L-tyrosine</name>
        <dbReference type="ChEBI" id="CHEBI:58315"/>
    </ligand>
</feature>
<feature type="binding site" evidence="1">
    <location>
        <position position="178"/>
    </location>
    <ligand>
        <name>L-tyrosine</name>
        <dbReference type="ChEBI" id="CHEBI:58315"/>
    </ligand>
</feature>
<feature type="binding site" evidence="1">
    <location>
        <position position="237"/>
    </location>
    <ligand>
        <name>ATP</name>
        <dbReference type="ChEBI" id="CHEBI:30616"/>
    </ligand>
</feature>
<comment type="function">
    <text evidence="1">Catalyzes the attachment of tyrosine to tRNA(Tyr) in a two-step reaction: tyrosine is first activated by ATP to form Tyr-AMP and then transferred to the acceptor end of tRNA(Tyr).</text>
</comment>
<comment type="catalytic activity">
    <reaction evidence="1">
        <text>tRNA(Tyr) + L-tyrosine + ATP = L-tyrosyl-tRNA(Tyr) + AMP + diphosphate + H(+)</text>
        <dbReference type="Rhea" id="RHEA:10220"/>
        <dbReference type="Rhea" id="RHEA-COMP:9706"/>
        <dbReference type="Rhea" id="RHEA-COMP:9707"/>
        <dbReference type="ChEBI" id="CHEBI:15378"/>
        <dbReference type="ChEBI" id="CHEBI:30616"/>
        <dbReference type="ChEBI" id="CHEBI:33019"/>
        <dbReference type="ChEBI" id="CHEBI:58315"/>
        <dbReference type="ChEBI" id="CHEBI:78442"/>
        <dbReference type="ChEBI" id="CHEBI:78536"/>
        <dbReference type="ChEBI" id="CHEBI:456215"/>
        <dbReference type="EC" id="6.1.1.1"/>
    </reaction>
</comment>
<comment type="subunit">
    <text evidence="1">Homodimer.</text>
</comment>
<comment type="subcellular location">
    <subcellularLocation>
        <location evidence="1">Cytoplasm</location>
    </subcellularLocation>
</comment>
<comment type="similarity">
    <text evidence="1">Belongs to the class-I aminoacyl-tRNA synthetase family. TyrS type 1 subfamily.</text>
</comment>
<proteinExistence type="inferred from homology"/>
<organism>
    <name type="scientific">Laribacter hongkongensis (strain HLHK9)</name>
    <dbReference type="NCBI Taxonomy" id="557598"/>
    <lineage>
        <taxon>Bacteria</taxon>
        <taxon>Pseudomonadati</taxon>
        <taxon>Pseudomonadota</taxon>
        <taxon>Betaproteobacteria</taxon>
        <taxon>Neisseriales</taxon>
        <taxon>Aquaspirillaceae</taxon>
        <taxon>Laribacter</taxon>
    </lineage>
</organism>
<accession>C1DCW5</accession>
<sequence>MSERNVIQELEARGLIAQQTDSGALQKLLESESVTLYCGFDPTADSLHLGHLVPLLMLRRFQEAGHRPIALVGGATGMIGDPSFKAAERKLNTPDVIAGWVDKIRRQLSPFLSFEGDNAAVMANNYDWFGQMNVLEFLRDIGKHFSVNAMIKKESVQQRISREDQGISFTEFSYSLLQGNDFAELNCRFGCKLQIGGSDQWGNITAGIDLTRRLNQQQVFGLTVPLITNSDGTKFGKSEGNAVWLDPQKCSPYKFYQFWLGVADADVYRFLRYFTFLSIEQIDAIEAADKTSGTRPQAQRILAEEATRLVHGDEALKAAQRITESLFSNDLSALTAEDLAQLALDGLPVLDMAGQGDGLIDALAASGLAKSKSEARTFIQSGAVSINGIKAEGLDYCLTGNDRLFGRYTLLKRGKKLYALLVWPA</sequence>